<reference key="1">
    <citation type="journal article" date="2009" name="PLoS Genet.">
        <title>Organised genome dynamics in the Escherichia coli species results in highly diverse adaptive paths.</title>
        <authorList>
            <person name="Touchon M."/>
            <person name="Hoede C."/>
            <person name="Tenaillon O."/>
            <person name="Barbe V."/>
            <person name="Baeriswyl S."/>
            <person name="Bidet P."/>
            <person name="Bingen E."/>
            <person name="Bonacorsi S."/>
            <person name="Bouchier C."/>
            <person name="Bouvet O."/>
            <person name="Calteau A."/>
            <person name="Chiapello H."/>
            <person name="Clermont O."/>
            <person name="Cruveiller S."/>
            <person name="Danchin A."/>
            <person name="Diard M."/>
            <person name="Dossat C."/>
            <person name="Karoui M.E."/>
            <person name="Frapy E."/>
            <person name="Garry L."/>
            <person name="Ghigo J.M."/>
            <person name="Gilles A.M."/>
            <person name="Johnson J."/>
            <person name="Le Bouguenec C."/>
            <person name="Lescat M."/>
            <person name="Mangenot S."/>
            <person name="Martinez-Jehanne V."/>
            <person name="Matic I."/>
            <person name="Nassif X."/>
            <person name="Oztas S."/>
            <person name="Petit M.A."/>
            <person name="Pichon C."/>
            <person name="Rouy Z."/>
            <person name="Ruf C.S."/>
            <person name="Schneider D."/>
            <person name="Tourret J."/>
            <person name="Vacherie B."/>
            <person name="Vallenet D."/>
            <person name="Medigue C."/>
            <person name="Rocha E.P.C."/>
            <person name="Denamur E."/>
        </authorList>
    </citation>
    <scope>NUCLEOTIDE SEQUENCE [LARGE SCALE GENOMIC DNA]</scope>
    <source>
        <strain>IAI39 / ExPEC</strain>
    </source>
</reference>
<sequence length="431" mass="48697">MVSLEKNDHLMLARQLPLKSVALILAGGRGTRLKDLTNKRAKPAVHFGGKFRIIDFALSNCINSGIRRMGVITQYQSHTLVQHIQRGWSFFNEEMNEFVDLLPAQQRMKGENWYRGTADAVTQNLDIIRRYKAEYVVILAGDHIYKQDYSRMLIDHVEKGARCTVACMPVPIEEASAFGVMAVDENDKIIEFVEKPANPPSMPNDPSKSLASMGIYVFDADYLYELLEEDDRDKNSSHDFGKDLIPKITEAGLAYAHPFPLSCVQSDPDAEPYWRDVGTLEAYWKANLDLASVVPELDMYDRNWPIRTYNESLPPAKFVQDRSGSHGMTLNSLVSGGCVISGSVVVQSVLFSRVRVNSFCNIDSAVLLPEVWVGRSCRLRRCVIDRACVIPEGMVIGENAEEDARRFYRSEEGIVLVTREMLRKLGHKQER</sequence>
<dbReference type="EC" id="2.7.7.27" evidence="1"/>
<dbReference type="EMBL" id="CU928164">
    <property type="protein sequence ID" value="CAR20023.1"/>
    <property type="molecule type" value="Genomic_DNA"/>
</dbReference>
<dbReference type="RefSeq" id="WP_000253982.1">
    <property type="nucleotide sequence ID" value="NC_011750.1"/>
</dbReference>
<dbReference type="RefSeq" id="YP_002409804.1">
    <property type="nucleotide sequence ID" value="NC_011750.1"/>
</dbReference>
<dbReference type="SMR" id="B7NMJ5"/>
<dbReference type="STRING" id="585057.ECIAI39_3911"/>
<dbReference type="KEGG" id="ect:ECIAI39_3911"/>
<dbReference type="PATRIC" id="fig|585057.6.peg.4051"/>
<dbReference type="HOGENOM" id="CLU_029499_14_1_6"/>
<dbReference type="UniPathway" id="UPA00164"/>
<dbReference type="Proteomes" id="UP000000749">
    <property type="component" value="Chromosome"/>
</dbReference>
<dbReference type="GO" id="GO:0005524">
    <property type="term" value="F:ATP binding"/>
    <property type="evidence" value="ECO:0007669"/>
    <property type="project" value="UniProtKB-KW"/>
</dbReference>
<dbReference type="GO" id="GO:0008878">
    <property type="term" value="F:glucose-1-phosphate adenylyltransferase activity"/>
    <property type="evidence" value="ECO:0007669"/>
    <property type="project" value="UniProtKB-UniRule"/>
</dbReference>
<dbReference type="GO" id="GO:0005978">
    <property type="term" value="P:glycogen biosynthetic process"/>
    <property type="evidence" value="ECO:0007669"/>
    <property type="project" value="UniProtKB-UniRule"/>
</dbReference>
<dbReference type="CDD" id="cd02508">
    <property type="entry name" value="ADP_Glucose_PP"/>
    <property type="match status" value="1"/>
</dbReference>
<dbReference type="CDD" id="cd04651">
    <property type="entry name" value="LbH_G1P_AT_C"/>
    <property type="match status" value="1"/>
</dbReference>
<dbReference type="FunFam" id="2.160.10.10:FF:000006">
    <property type="entry name" value="Glucose-1-phosphate adenylyltransferase"/>
    <property type="match status" value="1"/>
</dbReference>
<dbReference type="FunFam" id="3.90.550.10:FF:000014">
    <property type="entry name" value="Glucose-1-phosphate adenylyltransferase"/>
    <property type="match status" value="1"/>
</dbReference>
<dbReference type="Gene3D" id="2.160.10.10">
    <property type="entry name" value="Hexapeptide repeat proteins"/>
    <property type="match status" value="1"/>
</dbReference>
<dbReference type="Gene3D" id="3.90.550.10">
    <property type="entry name" value="Spore Coat Polysaccharide Biosynthesis Protein SpsA, Chain A"/>
    <property type="match status" value="1"/>
</dbReference>
<dbReference type="HAMAP" id="MF_00624">
    <property type="entry name" value="GlgC"/>
    <property type="match status" value="1"/>
</dbReference>
<dbReference type="InterPro" id="IPR011831">
    <property type="entry name" value="ADP-Glc_PPase"/>
</dbReference>
<dbReference type="InterPro" id="IPR005836">
    <property type="entry name" value="ADP_Glu_pyroP_CS"/>
</dbReference>
<dbReference type="InterPro" id="IPR023049">
    <property type="entry name" value="GlgC_bac"/>
</dbReference>
<dbReference type="InterPro" id="IPR056818">
    <property type="entry name" value="GlmU/GlgC-like_hexapep"/>
</dbReference>
<dbReference type="InterPro" id="IPR005835">
    <property type="entry name" value="NTP_transferase_dom"/>
</dbReference>
<dbReference type="InterPro" id="IPR029044">
    <property type="entry name" value="Nucleotide-diphossugar_trans"/>
</dbReference>
<dbReference type="InterPro" id="IPR011004">
    <property type="entry name" value="Trimer_LpxA-like_sf"/>
</dbReference>
<dbReference type="NCBIfam" id="TIGR02091">
    <property type="entry name" value="glgC"/>
    <property type="match status" value="1"/>
</dbReference>
<dbReference type="NCBIfam" id="NF001947">
    <property type="entry name" value="PRK00725.1"/>
    <property type="match status" value="1"/>
</dbReference>
<dbReference type="NCBIfam" id="NF002023">
    <property type="entry name" value="PRK00844.1"/>
    <property type="match status" value="1"/>
</dbReference>
<dbReference type="PANTHER" id="PTHR43523:SF2">
    <property type="entry name" value="GLUCOSE-1-PHOSPHATE ADENYLYLTRANSFERASE"/>
    <property type="match status" value="1"/>
</dbReference>
<dbReference type="PANTHER" id="PTHR43523">
    <property type="entry name" value="GLUCOSE-1-PHOSPHATE ADENYLYLTRANSFERASE-RELATED"/>
    <property type="match status" value="1"/>
</dbReference>
<dbReference type="Pfam" id="PF24894">
    <property type="entry name" value="Hexapep_GlmU"/>
    <property type="match status" value="1"/>
</dbReference>
<dbReference type="Pfam" id="PF00483">
    <property type="entry name" value="NTP_transferase"/>
    <property type="match status" value="1"/>
</dbReference>
<dbReference type="SUPFAM" id="SSF53448">
    <property type="entry name" value="Nucleotide-diphospho-sugar transferases"/>
    <property type="match status" value="1"/>
</dbReference>
<dbReference type="SUPFAM" id="SSF51161">
    <property type="entry name" value="Trimeric LpxA-like enzymes"/>
    <property type="match status" value="1"/>
</dbReference>
<dbReference type="PROSITE" id="PS00808">
    <property type="entry name" value="ADP_GLC_PYROPHOSPH_1"/>
    <property type="match status" value="1"/>
</dbReference>
<dbReference type="PROSITE" id="PS00809">
    <property type="entry name" value="ADP_GLC_PYROPHOSPH_2"/>
    <property type="match status" value="1"/>
</dbReference>
<dbReference type="PROSITE" id="PS00810">
    <property type="entry name" value="ADP_GLC_PYROPHOSPH_3"/>
    <property type="match status" value="1"/>
</dbReference>
<organism>
    <name type="scientific">Escherichia coli O7:K1 (strain IAI39 / ExPEC)</name>
    <dbReference type="NCBI Taxonomy" id="585057"/>
    <lineage>
        <taxon>Bacteria</taxon>
        <taxon>Pseudomonadati</taxon>
        <taxon>Pseudomonadota</taxon>
        <taxon>Gammaproteobacteria</taxon>
        <taxon>Enterobacterales</taxon>
        <taxon>Enterobacteriaceae</taxon>
        <taxon>Escherichia</taxon>
    </lineage>
</organism>
<keyword id="KW-0021">Allosteric enzyme</keyword>
<keyword id="KW-0067">ATP-binding</keyword>
<keyword id="KW-0119">Carbohydrate metabolism</keyword>
<keyword id="KW-0320">Glycogen biosynthesis</keyword>
<keyword id="KW-0321">Glycogen metabolism</keyword>
<keyword id="KW-0547">Nucleotide-binding</keyword>
<keyword id="KW-0548">Nucleotidyltransferase</keyword>
<keyword id="KW-0808">Transferase</keyword>
<feature type="chain" id="PRO_1000130477" description="Glucose-1-phosphate adenylyltransferase">
    <location>
        <begin position="1"/>
        <end position="431"/>
    </location>
</feature>
<feature type="binding site" evidence="1">
    <location>
        <position position="39"/>
    </location>
    <ligand>
        <name>beta-D-fructose 1,6-bisphosphate</name>
        <dbReference type="ChEBI" id="CHEBI:32966"/>
    </ligand>
</feature>
<feature type="binding site" evidence="1">
    <location>
        <position position="40"/>
    </location>
    <ligand>
        <name>AMP</name>
        <dbReference type="ChEBI" id="CHEBI:456215"/>
    </ligand>
</feature>
<feature type="binding site" evidence="1">
    <location>
        <position position="46"/>
    </location>
    <ligand>
        <name>AMP</name>
        <dbReference type="ChEBI" id="CHEBI:456215"/>
    </ligand>
</feature>
<feature type="binding site" evidence="1">
    <location>
        <position position="52"/>
    </location>
    <ligand>
        <name>AMP</name>
        <dbReference type="ChEBI" id="CHEBI:456215"/>
    </ligand>
</feature>
<feature type="binding site" evidence="1">
    <location>
        <position position="114"/>
    </location>
    <ligand>
        <name>alpha-D-glucose 1-phosphate</name>
        <dbReference type="ChEBI" id="CHEBI:58601"/>
    </ligand>
</feature>
<feature type="binding site" evidence="1">
    <location>
        <position position="130"/>
    </location>
    <ligand>
        <name>AMP</name>
        <dbReference type="ChEBI" id="CHEBI:456215"/>
    </ligand>
</feature>
<feature type="binding site" evidence="1">
    <location>
        <position position="179"/>
    </location>
    <ligand>
        <name>alpha-D-glucose 1-phosphate</name>
        <dbReference type="ChEBI" id="CHEBI:58601"/>
    </ligand>
</feature>
<feature type="binding site" evidence="1">
    <location>
        <begin position="194"/>
        <end position="195"/>
    </location>
    <ligand>
        <name>alpha-D-glucose 1-phosphate</name>
        <dbReference type="ChEBI" id="CHEBI:58601"/>
    </ligand>
</feature>
<feature type="binding site" evidence="1">
    <location>
        <position position="212"/>
    </location>
    <ligand>
        <name>alpha-D-glucose 1-phosphate</name>
        <dbReference type="ChEBI" id="CHEBI:58601"/>
    </ligand>
</feature>
<feature type="binding site" evidence="1">
    <location>
        <position position="370"/>
    </location>
    <ligand>
        <name>AMP</name>
        <dbReference type="ChEBI" id="CHEBI:456215"/>
    </ligand>
</feature>
<feature type="binding site" evidence="1">
    <location>
        <position position="386"/>
    </location>
    <ligand>
        <name>AMP</name>
        <dbReference type="ChEBI" id="CHEBI:456215"/>
    </ligand>
</feature>
<feature type="binding site" evidence="1">
    <location>
        <begin position="419"/>
        <end position="423"/>
    </location>
    <ligand>
        <name>beta-D-fructose 1,6-bisphosphate</name>
        <dbReference type="ChEBI" id="CHEBI:32966"/>
    </ligand>
</feature>
<feature type="binding site" evidence="1">
    <location>
        <begin position="429"/>
        <end position="431"/>
    </location>
    <ligand>
        <name>beta-D-fructose 1,6-bisphosphate</name>
        <dbReference type="ChEBI" id="CHEBI:32966"/>
    </ligand>
</feature>
<feature type="site" description="Could play a key role in the communication between the regulatory and the substrate sites" evidence="1">
    <location>
        <position position="74"/>
    </location>
</feature>
<feature type="site" description="Could play a key role in the communication between the regulatory and the substrate sites" evidence="1">
    <location>
        <position position="113"/>
    </location>
</feature>
<name>GLGC_ECO7I</name>
<evidence type="ECO:0000255" key="1">
    <source>
        <dbReference type="HAMAP-Rule" id="MF_00624"/>
    </source>
</evidence>
<gene>
    <name evidence="1" type="primary">glgC</name>
    <name type="ordered locus">ECIAI39_3911</name>
</gene>
<comment type="function">
    <text evidence="1">Involved in the biosynthesis of ADP-glucose, a building block required for the elongation reactions to produce glycogen. Catalyzes the reaction between ATP and alpha-D-glucose 1-phosphate (G1P) to produce pyrophosphate and ADP-Glc.</text>
</comment>
<comment type="catalytic activity">
    <reaction evidence="1">
        <text>alpha-D-glucose 1-phosphate + ATP + H(+) = ADP-alpha-D-glucose + diphosphate</text>
        <dbReference type="Rhea" id="RHEA:12120"/>
        <dbReference type="ChEBI" id="CHEBI:15378"/>
        <dbReference type="ChEBI" id="CHEBI:30616"/>
        <dbReference type="ChEBI" id="CHEBI:33019"/>
        <dbReference type="ChEBI" id="CHEBI:57498"/>
        <dbReference type="ChEBI" id="CHEBI:58601"/>
        <dbReference type="EC" id="2.7.7.27"/>
    </reaction>
</comment>
<comment type="activity regulation">
    <text evidence="1">Allosterically activated by fructose-1,6-bisphosphate (F16BP) and inhibited by AMP.</text>
</comment>
<comment type="pathway">
    <text evidence="1">Glycan biosynthesis; glycogen biosynthesis.</text>
</comment>
<comment type="subunit">
    <text evidence="1">Homotetramer.</text>
</comment>
<comment type="similarity">
    <text evidence="1">Belongs to the bacterial/plant glucose-1-phosphate adenylyltransferase family.</text>
</comment>
<accession>B7NMJ5</accession>
<proteinExistence type="inferred from homology"/>
<protein>
    <recommendedName>
        <fullName evidence="1">Glucose-1-phosphate adenylyltransferase</fullName>
        <ecNumber evidence="1">2.7.7.27</ecNumber>
    </recommendedName>
    <alternativeName>
        <fullName evidence="1">ADP-glucose pyrophosphorylase</fullName>
        <shortName evidence="1">ADPGlc PPase</shortName>
    </alternativeName>
    <alternativeName>
        <fullName evidence="1">ADP-glucose synthase</fullName>
    </alternativeName>
</protein>